<organism>
    <name type="scientific">Mycoplasma pneumoniae (strain ATCC 29342 / M129 / Subtype 1)</name>
    <name type="common">Mycoplasmoides pneumoniae</name>
    <dbReference type="NCBI Taxonomy" id="272634"/>
    <lineage>
        <taxon>Bacteria</taxon>
        <taxon>Bacillati</taxon>
        <taxon>Mycoplasmatota</taxon>
        <taxon>Mycoplasmoidales</taxon>
        <taxon>Mycoplasmoidaceae</taxon>
        <taxon>Mycoplasmoides</taxon>
    </lineage>
</organism>
<dbReference type="EMBL" id="U00089">
    <property type="protein sequence ID" value="AAB95941.1"/>
    <property type="molecule type" value="Genomic_DNA"/>
</dbReference>
<dbReference type="PIR" id="S73619">
    <property type="entry name" value="S73619"/>
</dbReference>
<dbReference type="RefSeq" id="NP_110238.1">
    <property type="nucleotide sequence ID" value="NC_000912.1"/>
</dbReference>
<dbReference type="RefSeq" id="WP_010874906.1">
    <property type="nucleotide sequence ID" value="NZ_OU342337.1"/>
</dbReference>
<dbReference type="SMR" id="P75229"/>
<dbReference type="IntAct" id="P75229">
    <property type="interactions" value="1"/>
</dbReference>
<dbReference type="STRING" id="272634.MPN_549"/>
<dbReference type="EnsemblBacteria" id="AAB95941">
    <property type="protein sequence ID" value="AAB95941"/>
    <property type="gene ID" value="MPN_549"/>
</dbReference>
<dbReference type="KEGG" id="mpn:MPN_549"/>
<dbReference type="PATRIC" id="fig|272634.6.peg.611"/>
<dbReference type="HOGENOM" id="CLU_039720_1_0_14"/>
<dbReference type="OrthoDB" id="9803668at2"/>
<dbReference type="BioCyc" id="MPNE272634:G1GJ3-904-MONOMER"/>
<dbReference type="Proteomes" id="UP000000808">
    <property type="component" value="Chromosome"/>
</dbReference>
<dbReference type="GO" id="GO:0003676">
    <property type="term" value="F:nucleic acid binding"/>
    <property type="evidence" value="ECO:0007669"/>
    <property type="project" value="InterPro"/>
</dbReference>
<dbReference type="Gene3D" id="3.10.310.30">
    <property type="match status" value="1"/>
</dbReference>
<dbReference type="Gene3D" id="3.90.1640.10">
    <property type="entry name" value="inorganic pyrophosphatase (n-terminal core)"/>
    <property type="match status" value="1"/>
</dbReference>
<dbReference type="InterPro" id="IPR001667">
    <property type="entry name" value="DDH_dom"/>
</dbReference>
<dbReference type="InterPro" id="IPR038763">
    <property type="entry name" value="DHH_sf"/>
</dbReference>
<dbReference type="InterPro" id="IPR003156">
    <property type="entry name" value="DHHA1_dom"/>
</dbReference>
<dbReference type="InterPro" id="IPR051319">
    <property type="entry name" value="Oligoribo/pAp-PDE_c-di-AMP_PDE"/>
</dbReference>
<dbReference type="PANTHER" id="PTHR47618">
    <property type="entry name" value="BIFUNCTIONAL OLIGORIBONUCLEASE AND PAP PHOSPHATASE NRNA"/>
    <property type="match status" value="1"/>
</dbReference>
<dbReference type="PANTHER" id="PTHR47618:SF1">
    <property type="entry name" value="BIFUNCTIONAL OLIGORIBONUCLEASE AND PAP PHOSPHATASE NRNA"/>
    <property type="match status" value="1"/>
</dbReference>
<dbReference type="Pfam" id="PF01368">
    <property type="entry name" value="DHH"/>
    <property type="match status" value="1"/>
</dbReference>
<dbReference type="Pfam" id="PF02272">
    <property type="entry name" value="DHHA1"/>
    <property type="match status" value="1"/>
</dbReference>
<dbReference type="SUPFAM" id="SSF64182">
    <property type="entry name" value="DHH phosphoesterases"/>
    <property type="match status" value="1"/>
</dbReference>
<evidence type="ECO:0000305" key="1"/>
<feature type="chain" id="PRO_0000210573" description="Uncharacterized protein MG371 homolog">
    <location>
        <begin position="1"/>
        <end position="325"/>
    </location>
</feature>
<name>Y549_MYCPN</name>
<proteinExistence type="inferred from homology"/>
<gene>
    <name type="ordered locus">MPN_549</name>
    <name type="ORF">G12_orf325</name>
    <name type="ORF">MP293</name>
</gene>
<protein>
    <recommendedName>
        <fullName>Uncharacterized protein MG371 homolog</fullName>
    </recommendedName>
</protein>
<reference key="1">
    <citation type="journal article" date="1996" name="Nucleic Acids Res.">
        <title>Complete sequence analysis of the genome of the bacterium Mycoplasma pneumoniae.</title>
        <authorList>
            <person name="Himmelreich R."/>
            <person name="Hilbert H."/>
            <person name="Plagens H."/>
            <person name="Pirkl E."/>
            <person name="Li B.-C."/>
            <person name="Herrmann R."/>
        </authorList>
    </citation>
    <scope>NUCLEOTIDE SEQUENCE [LARGE SCALE GENOMIC DNA]</scope>
    <source>
        <strain>ATCC 29342 / M129 / Subtype 1</strain>
    </source>
</reference>
<sequence length="325" mass="36767">MINIDPHFIHNLTNKLKTFDNFSLYVHVNPDFDAFGAAFAFKAFLAVYFPHKKAYVMGSHNIKADGKDLFPFEAAPIDDAFVKNSLAIIFDTSNQERVLTQKHKLAKETVRIDHHPKTESFADLEWIDPAFSAAAEMVGYLILQMGYELNAEMAAYIYAGIITDTQRFSSSATTPQTFALTAKLLETGFNRNKVHDAVYLKPLLEHKYFSYVLNKAKITPNGLAYALLKKGTYKQFGVVSPLPMVHALNNIKGVKIWTTCYFNEDIKKWIGSIRSRSIPINNFAQMFGGGGHKYAAAFVLDDKRQFMKLVEIMDDFLAKQKHVNS</sequence>
<keyword id="KW-1185">Reference proteome</keyword>
<accession>P75229</accession>
<comment type="similarity">
    <text evidence="1">Belongs to the mgp1/MG371 family.</text>
</comment>